<comment type="function">
    <text evidence="1">Required for the insertion and/or proper folding and/or complex formation of integral membrane proteins into the membrane. Involved in integration of membrane proteins that insert both dependently and independently of the Sec translocase complex, as well as at least some lipoproteins. Aids folding of multispanning membrane proteins.</text>
</comment>
<comment type="subunit">
    <text evidence="1">Interacts with the Sec translocase complex via SecD. Specifically interacts with transmembrane segments of nascent integral membrane proteins during membrane integration.</text>
</comment>
<comment type="subcellular location">
    <subcellularLocation>
        <location evidence="1">Cell inner membrane</location>
        <topology evidence="1">Multi-pass membrane protein</topology>
    </subcellularLocation>
</comment>
<comment type="similarity">
    <text evidence="1">Belongs to the OXA1/ALB3/YidC family. Type 1 subfamily.</text>
</comment>
<sequence>MDSQRNLLVIALLFVSFMIWQAWEQDKNPQPQAQQTTQTTTTAAGSAADQGVPASGQGKLISVKTDVLDLTINTRGGDVEQALLPAYPKELNSTQPFQLLETSPQFIYQAQSGLTGRDGPDNPANGPRPLYNVEKDAYVLAEGQNELQVPMTYTDAAGNTFTKTFVLKRGDYAVNVNYNVQNAGEKPLEISTFGQLKQSITLPPHLDTGSSNFALHTFRGAAYSTPDEKYEKYKFDTIADNENLNISSKGGWVAMLQQYFATAWIPHNDGTNNFYTANLGNGIAAIGYKSQPVLVQPGQTGAMNSTLWVGPEIQDKMAAVAPHLDLTVDYGWLWFISQPLFKLLKWIHSFVGNWGFSIIIITFIVRGIMYPLTKAQYTSMAKMRMLQPKIQAMRERLGDDKQRISQEMMALYKAEKVNPLGGCFPLLIQMPIFLALYYMLMGSVELRQAPFALWIHDLSAQDPYYILPILMGVTMFFIQKMSPTTVTDPMQQKIMTFMPVIFTVFFLWFPSGLVLYYIVSNLVTIIQQQLIYRGLEKRGLHSREKKKS</sequence>
<protein>
    <recommendedName>
        <fullName evidence="1">Membrane protein insertase YidC</fullName>
    </recommendedName>
    <alternativeName>
        <fullName evidence="1">Foldase YidC</fullName>
    </alternativeName>
    <alternativeName>
        <fullName evidence="1">Membrane integrase YidC</fullName>
    </alternativeName>
    <alternativeName>
        <fullName evidence="1">Membrane protein YidC</fullName>
    </alternativeName>
</protein>
<accession>B7UMH2</accession>
<dbReference type="EMBL" id="FM180568">
    <property type="protein sequence ID" value="CAS11564.1"/>
    <property type="molecule type" value="Genomic_DNA"/>
</dbReference>
<dbReference type="RefSeq" id="WP_000378258.1">
    <property type="nucleotide sequence ID" value="NC_011601.1"/>
</dbReference>
<dbReference type="SMR" id="B7UMH2"/>
<dbReference type="GeneID" id="93778448"/>
<dbReference type="KEGG" id="ecg:E2348C_4016"/>
<dbReference type="HOGENOM" id="CLU_016535_3_0_6"/>
<dbReference type="Proteomes" id="UP000008205">
    <property type="component" value="Chromosome"/>
</dbReference>
<dbReference type="GO" id="GO:0005886">
    <property type="term" value="C:plasma membrane"/>
    <property type="evidence" value="ECO:0007669"/>
    <property type="project" value="UniProtKB-SubCell"/>
</dbReference>
<dbReference type="GO" id="GO:0032977">
    <property type="term" value="F:membrane insertase activity"/>
    <property type="evidence" value="ECO:0007669"/>
    <property type="project" value="InterPro"/>
</dbReference>
<dbReference type="GO" id="GO:0051205">
    <property type="term" value="P:protein insertion into membrane"/>
    <property type="evidence" value="ECO:0007669"/>
    <property type="project" value="TreeGrafter"/>
</dbReference>
<dbReference type="GO" id="GO:0015031">
    <property type="term" value="P:protein transport"/>
    <property type="evidence" value="ECO:0007669"/>
    <property type="project" value="UniProtKB-KW"/>
</dbReference>
<dbReference type="CDD" id="cd20070">
    <property type="entry name" value="5TM_YidC_Alb3"/>
    <property type="match status" value="1"/>
</dbReference>
<dbReference type="CDD" id="cd19961">
    <property type="entry name" value="EcYidC-like_peri"/>
    <property type="match status" value="1"/>
</dbReference>
<dbReference type="FunFam" id="2.70.98.90:FF:000001">
    <property type="entry name" value="Membrane protein insertase YidC"/>
    <property type="match status" value="1"/>
</dbReference>
<dbReference type="Gene3D" id="2.70.98.90">
    <property type="match status" value="1"/>
</dbReference>
<dbReference type="HAMAP" id="MF_01810">
    <property type="entry name" value="YidC_type1"/>
    <property type="match status" value="1"/>
</dbReference>
<dbReference type="InterPro" id="IPR019998">
    <property type="entry name" value="Membr_insert_YidC"/>
</dbReference>
<dbReference type="InterPro" id="IPR028053">
    <property type="entry name" value="Membr_insert_YidC_N"/>
</dbReference>
<dbReference type="InterPro" id="IPR001708">
    <property type="entry name" value="YidC/ALB3/OXA1/COX18"/>
</dbReference>
<dbReference type="InterPro" id="IPR028055">
    <property type="entry name" value="YidC/Oxa/ALB_C"/>
</dbReference>
<dbReference type="InterPro" id="IPR047196">
    <property type="entry name" value="YidC_ALB_C"/>
</dbReference>
<dbReference type="InterPro" id="IPR038221">
    <property type="entry name" value="YidC_periplasmic_sf"/>
</dbReference>
<dbReference type="NCBIfam" id="NF002351">
    <property type="entry name" value="PRK01318.1-1"/>
    <property type="match status" value="1"/>
</dbReference>
<dbReference type="NCBIfam" id="NF002352">
    <property type="entry name" value="PRK01318.1-3"/>
    <property type="match status" value="1"/>
</dbReference>
<dbReference type="NCBIfam" id="NF002353">
    <property type="entry name" value="PRK01318.1-4"/>
    <property type="match status" value="1"/>
</dbReference>
<dbReference type="NCBIfam" id="TIGR03593">
    <property type="entry name" value="yidC_nterm"/>
    <property type="match status" value="1"/>
</dbReference>
<dbReference type="NCBIfam" id="TIGR03592">
    <property type="entry name" value="yidC_oxa1_cterm"/>
    <property type="match status" value="1"/>
</dbReference>
<dbReference type="PANTHER" id="PTHR12428:SF65">
    <property type="entry name" value="CYTOCHROME C OXIDASE ASSEMBLY PROTEIN COX18, MITOCHONDRIAL"/>
    <property type="match status" value="1"/>
</dbReference>
<dbReference type="PANTHER" id="PTHR12428">
    <property type="entry name" value="OXA1"/>
    <property type="match status" value="1"/>
</dbReference>
<dbReference type="Pfam" id="PF02096">
    <property type="entry name" value="60KD_IMP"/>
    <property type="match status" value="1"/>
</dbReference>
<dbReference type="Pfam" id="PF14849">
    <property type="entry name" value="YidC_periplas"/>
    <property type="match status" value="1"/>
</dbReference>
<dbReference type="PRINTS" id="PR00701">
    <property type="entry name" value="60KDINNERMP"/>
</dbReference>
<dbReference type="PRINTS" id="PR01900">
    <property type="entry name" value="YIDCPROTEIN"/>
</dbReference>
<name>YIDC_ECO27</name>
<evidence type="ECO:0000255" key="1">
    <source>
        <dbReference type="HAMAP-Rule" id="MF_01810"/>
    </source>
</evidence>
<evidence type="ECO:0000256" key="2">
    <source>
        <dbReference type="SAM" id="MobiDB-lite"/>
    </source>
</evidence>
<reference key="1">
    <citation type="journal article" date="2009" name="J. Bacteriol.">
        <title>Complete genome sequence and comparative genome analysis of enteropathogenic Escherichia coli O127:H6 strain E2348/69.</title>
        <authorList>
            <person name="Iguchi A."/>
            <person name="Thomson N.R."/>
            <person name="Ogura Y."/>
            <person name="Saunders D."/>
            <person name="Ooka T."/>
            <person name="Henderson I.R."/>
            <person name="Harris D."/>
            <person name="Asadulghani M."/>
            <person name="Kurokawa K."/>
            <person name="Dean P."/>
            <person name="Kenny B."/>
            <person name="Quail M.A."/>
            <person name="Thurston S."/>
            <person name="Dougan G."/>
            <person name="Hayashi T."/>
            <person name="Parkhill J."/>
            <person name="Frankel G."/>
        </authorList>
    </citation>
    <scope>NUCLEOTIDE SEQUENCE [LARGE SCALE GENOMIC DNA]</scope>
    <source>
        <strain>E2348/69 / EPEC</strain>
    </source>
</reference>
<proteinExistence type="inferred from homology"/>
<feature type="chain" id="PRO_1000187655" description="Membrane protein insertase YidC">
    <location>
        <begin position="1"/>
        <end position="548"/>
    </location>
</feature>
<feature type="transmembrane region" description="Helical" evidence="1">
    <location>
        <begin position="6"/>
        <end position="26"/>
    </location>
</feature>
<feature type="transmembrane region" description="Helical" evidence="1">
    <location>
        <begin position="350"/>
        <end position="370"/>
    </location>
</feature>
<feature type="transmembrane region" description="Helical" evidence="1">
    <location>
        <begin position="420"/>
        <end position="440"/>
    </location>
</feature>
<feature type="transmembrane region" description="Helical" evidence="1">
    <location>
        <begin position="458"/>
        <end position="478"/>
    </location>
</feature>
<feature type="transmembrane region" description="Helical" evidence="1">
    <location>
        <begin position="499"/>
        <end position="519"/>
    </location>
</feature>
<feature type="region of interest" description="Disordered" evidence="2">
    <location>
        <begin position="28"/>
        <end position="55"/>
    </location>
</feature>
<feature type="compositionally biased region" description="Low complexity" evidence="2">
    <location>
        <begin position="30"/>
        <end position="50"/>
    </location>
</feature>
<keyword id="KW-0997">Cell inner membrane</keyword>
<keyword id="KW-1003">Cell membrane</keyword>
<keyword id="KW-0143">Chaperone</keyword>
<keyword id="KW-0472">Membrane</keyword>
<keyword id="KW-0653">Protein transport</keyword>
<keyword id="KW-1185">Reference proteome</keyword>
<keyword id="KW-0812">Transmembrane</keyword>
<keyword id="KW-1133">Transmembrane helix</keyword>
<keyword id="KW-0813">Transport</keyword>
<organism>
    <name type="scientific">Escherichia coli O127:H6 (strain E2348/69 / EPEC)</name>
    <dbReference type="NCBI Taxonomy" id="574521"/>
    <lineage>
        <taxon>Bacteria</taxon>
        <taxon>Pseudomonadati</taxon>
        <taxon>Pseudomonadota</taxon>
        <taxon>Gammaproteobacteria</taxon>
        <taxon>Enterobacterales</taxon>
        <taxon>Enterobacteriaceae</taxon>
        <taxon>Escherichia</taxon>
    </lineage>
</organism>
<gene>
    <name evidence="1" type="primary">yidC</name>
    <name type="ordered locus">E2348C_4016</name>
</gene>